<feature type="chain" id="PRO_0000351336" description="Autoinducer 2 import system permease protein LsrC">
    <location>
        <begin position="1"/>
        <end position="343"/>
    </location>
</feature>
<feature type="transmembrane region" description="Helical" evidence="2">
    <location>
        <begin position="13"/>
        <end position="33"/>
    </location>
</feature>
<feature type="transmembrane region" description="Helical" evidence="2">
    <location>
        <begin position="38"/>
        <end position="58"/>
    </location>
</feature>
<feature type="transmembrane region" description="Helical" evidence="2">
    <location>
        <begin position="61"/>
        <end position="81"/>
    </location>
</feature>
<feature type="transmembrane region" description="Helical" evidence="2">
    <location>
        <begin position="92"/>
        <end position="112"/>
    </location>
</feature>
<feature type="transmembrane region" description="Helical" evidence="2">
    <location>
        <begin position="114"/>
        <end position="134"/>
    </location>
</feature>
<feature type="transmembrane region" description="Helical" evidence="2">
    <location>
        <begin position="154"/>
        <end position="174"/>
    </location>
</feature>
<feature type="transmembrane region" description="Helical" evidence="2">
    <location>
        <begin position="212"/>
        <end position="232"/>
    </location>
</feature>
<feature type="transmembrane region" description="Helical" evidence="2">
    <location>
        <begin position="251"/>
        <end position="271"/>
    </location>
</feature>
<feature type="transmembrane region" description="Helical" evidence="2">
    <location>
        <begin position="283"/>
        <end position="303"/>
    </location>
</feature>
<feature type="region of interest" description="Disordered" evidence="3">
    <location>
        <begin position="321"/>
        <end position="343"/>
    </location>
</feature>
<evidence type="ECO:0000250" key="1"/>
<evidence type="ECO:0000255" key="2"/>
<evidence type="ECO:0000256" key="3">
    <source>
        <dbReference type="SAM" id="MobiDB-lite"/>
    </source>
</evidence>
<evidence type="ECO:0000305" key="4"/>
<comment type="function">
    <text evidence="1">Part of the ABC transporter complex LsrABCD involved in autoinducer 2 (AI-2) import. Probably responsible for the translocation of the substrate across the membrane (By similarity).</text>
</comment>
<comment type="subunit">
    <text evidence="1">The complex is composed of two ATP-binding proteins (LsrA), two transmembrane proteins (LsrC and LsrD) and a solute-binding protein (LsrB).</text>
</comment>
<comment type="subcellular location">
    <subcellularLocation>
        <location evidence="1">Cell inner membrane</location>
        <topology evidence="1">Multi-pass membrane protein</topology>
    </subcellularLocation>
</comment>
<comment type="similarity">
    <text evidence="4">Belongs to the binding-protein-dependent transport system permease family. AraH/RbsC subfamily.</text>
</comment>
<proteinExistence type="inferred from homology"/>
<sequence length="343" mass="35911">MKTLLKNRELSAFLAILALFGVLVALNPAYLSFQTLGMIFASSQILILLALGAALVMLTRNIDVSVGSTVGLCAIAVGVALNNGYSLPVSMLFALAIGALAGAFNGLLVVGLRIPAIVATLGTLGLYRGAMLLWTGGKWIEGLPSSLKSLSEPVALGVSPLGMAVLFLVLIGAWTLSRTVSGRDFYAVGDNLAAARQLGVAVNRTRMLAFTINGMLAACAGIVFASQIGFVPNQTGSGLEMKAIAACVLGGISLLGGTGTLIGAFLGAFFLTQIDTVLVLFRLPAWWNDFIAGLVLLGVLVLDGRLRQALTRHQRALKYSRFQPGNKGGKHVTPFPKRKKEVA</sequence>
<gene>
    <name type="primary">lsrC</name>
    <name type="ordered locus">Ent638_3535</name>
</gene>
<reference key="1">
    <citation type="journal article" date="2010" name="PLoS Genet.">
        <title>Genome sequence of the plant growth promoting endophytic bacterium Enterobacter sp. 638.</title>
        <authorList>
            <person name="Taghavi S."/>
            <person name="van der Lelie D."/>
            <person name="Hoffman A."/>
            <person name="Zhang Y.B."/>
            <person name="Walla M.D."/>
            <person name="Vangronsveld J."/>
            <person name="Newman L."/>
            <person name="Monchy S."/>
        </authorList>
    </citation>
    <scope>NUCLEOTIDE SEQUENCE [LARGE SCALE GENOMIC DNA]</scope>
    <source>
        <strain>638</strain>
    </source>
</reference>
<keyword id="KW-0997">Cell inner membrane</keyword>
<keyword id="KW-1003">Cell membrane</keyword>
<keyword id="KW-0472">Membrane</keyword>
<keyword id="KW-0812">Transmembrane</keyword>
<keyword id="KW-1133">Transmembrane helix</keyword>
<keyword id="KW-0813">Transport</keyword>
<dbReference type="EMBL" id="CP000653">
    <property type="protein sequence ID" value="ABP62193.1"/>
    <property type="molecule type" value="Genomic_DNA"/>
</dbReference>
<dbReference type="RefSeq" id="WP_015960519.1">
    <property type="nucleotide sequence ID" value="NC_009436.1"/>
</dbReference>
<dbReference type="STRING" id="399742.Ent638_3535"/>
<dbReference type="KEGG" id="ent:Ent638_3535"/>
<dbReference type="eggNOG" id="COG1172">
    <property type="taxonomic scope" value="Bacteria"/>
</dbReference>
<dbReference type="HOGENOM" id="CLU_028880_0_1_6"/>
<dbReference type="OrthoDB" id="6384190at2"/>
<dbReference type="Proteomes" id="UP000000230">
    <property type="component" value="Chromosome"/>
</dbReference>
<dbReference type="GO" id="GO:0005886">
    <property type="term" value="C:plasma membrane"/>
    <property type="evidence" value="ECO:0007669"/>
    <property type="project" value="UniProtKB-SubCell"/>
</dbReference>
<dbReference type="GO" id="GO:0022857">
    <property type="term" value="F:transmembrane transporter activity"/>
    <property type="evidence" value="ECO:0007669"/>
    <property type="project" value="InterPro"/>
</dbReference>
<dbReference type="CDD" id="cd06579">
    <property type="entry name" value="TM_PBP1_transp_AraH_like"/>
    <property type="match status" value="1"/>
</dbReference>
<dbReference type="InterPro" id="IPR001851">
    <property type="entry name" value="ABC_transp_permease"/>
</dbReference>
<dbReference type="NCBIfam" id="NF011961">
    <property type="entry name" value="PRK15432.1"/>
    <property type="match status" value="1"/>
</dbReference>
<dbReference type="PANTHER" id="PTHR32196">
    <property type="entry name" value="ABC TRANSPORTER PERMEASE PROTEIN YPHD-RELATED-RELATED"/>
    <property type="match status" value="1"/>
</dbReference>
<dbReference type="PANTHER" id="PTHR32196:SF29">
    <property type="entry name" value="AUTOINDUCER 2 IMPORT SYSTEM PERMEASE PROTEIN LSRC"/>
    <property type="match status" value="1"/>
</dbReference>
<dbReference type="Pfam" id="PF02653">
    <property type="entry name" value="BPD_transp_2"/>
    <property type="match status" value="1"/>
</dbReference>
<organism>
    <name type="scientific">Enterobacter sp. (strain 638)</name>
    <dbReference type="NCBI Taxonomy" id="399742"/>
    <lineage>
        <taxon>Bacteria</taxon>
        <taxon>Pseudomonadati</taxon>
        <taxon>Pseudomonadota</taxon>
        <taxon>Gammaproteobacteria</taxon>
        <taxon>Enterobacterales</taxon>
        <taxon>Enterobacteriaceae</taxon>
        <taxon>Enterobacter</taxon>
    </lineage>
</organism>
<name>LSRC_ENT38</name>
<protein>
    <recommendedName>
        <fullName>Autoinducer 2 import system permease protein LsrC</fullName>
        <shortName>AI-2 import system permease protein LsrC</shortName>
    </recommendedName>
</protein>
<accession>A4WER3</accession>